<comment type="function">
    <text evidence="1">Catalyzes the 2'-O-methylation at nucleotide C2498 in 23S rRNA.</text>
</comment>
<comment type="catalytic activity">
    <reaction evidence="1">
        <text>cytidine(2498) in 23S rRNA + S-adenosyl-L-methionine = 2'-O-methylcytidine(2498) in 23S rRNA + S-adenosyl-L-homocysteine + H(+)</text>
        <dbReference type="Rhea" id="RHEA:42788"/>
        <dbReference type="Rhea" id="RHEA-COMP:10244"/>
        <dbReference type="Rhea" id="RHEA-COMP:10245"/>
        <dbReference type="ChEBI" id="CHEBI:15378"/>
        <dbReference type="ChEBI" id="CHEBI:57856"/>
        <dbReference type="ChEBI" id="CHEBI:59789"/>
        <dbReference type="ChEBI" id="CHEBI:74495"/>
        <dbReference type="ChEBI" id="CHEBI:82748"/>
        <dbReference type="EC" id="2.1.1.186"/>
    </reaction>
</comment>
<comment type="subunit">
    <text evidence="1">Monomer.</text>
</comment>
<comment type="subcellular location">
    <subcellularLocation>
        <location evidence="1">Cytoplasm</location>
    </subcellularLocation>
</comment>
<comment type="similarity">
    <text evidence="1">Belongs to the class I-like SAM-binding methyltransferase superfamily. RNA methyltransferase RlmE family. RlmM subfamily.</text>
</comment>
<proteinExistence type="inferred from homology"/>
<sequence>MSGLIAYCRQGFEPELAAELRDRAVLLGIASDIHAQRNHGFVLLRCDPLHVDTLLQQLHWRRLIFARQTLRLHAELKTLNSRDRIAPILAALPKTPCFGDLWIEYPDSDMGKPLAGLARSFGNALRPVLRSAGRLSAQLHPQWPRLHVCFLSGDHVLLGSTRSVDSAPWQLGIPRLKLLPEAPSRSALKLEEALITLLTPNEREAKLRPGMCATDLGAAPGGWTWVLICQHLRVTSIDNAALRPPLLNHPLVQHVRADGFRWIPPRPMDWMVCDMVEQPRRVAERMAVWLREGWCRHMIFNLKLPMKKRWDETRLCLERFETQAAVPLTLRAKQLYHDREEITVYASNDAR</sequence>
<organism>
    <name type="scientific">Xylella fastidiosa (strain Temecula1 / ATCC 700964)</name>
    <dbReference type="NCBI Taxonomy" id="183190"/>
    <lineage>
        <taxon>Bacteria</taxon>
        <taxon>Pseudomonadati</taxon>
        <taxon>Pseudomonadota</taxon>
        <taxon>Gammaproteobacteria</taxon>
        <taxon>Lysobacterales</taxon>
        <taxon>Lysobacteraceae</taxon>
        <taxon>Xylella</taxon>
    </lineage>
</organism>
<dbReference type="EC" id="2.1.1.186" evidence="1"/>
<dbReference type="EMBL" id="AE009442">
    <property type="protein sequence ID" value="AAO29737.1"/>
    <property type="molecule type" value="Genomic_DNA"/>
</dbReference>
<dbReference type="RefSeq" id="WP_011098306.1">
    <property type="nucleotide sequence ID" value="NC_004556.1"/>
</dbReference>
<dbReference type="SMR" id="Q87AC0"/>
<dbReference type="GeneID" id="93905766"/>
<dbReference type="KEGG" id="xft:PD_1906"/>
<dbReference type="HOGENOM" id="CLU_043780_0_0_6"/>
<dbReference type="Proteomes" id="UP000002516">
    <property type="component" value="Chromosome"/>
</dbReference>
<dbReference type="GO" id="GO:0005737">
    <property type="term" value="C:cytoplasm"/>
    <property type="evidence" value="ECO:0007669"/>
    <property type="project" value="UniProtKB-SubCell"/>
</dbReference>
<dbReference type="GO" id="GO:0008757">
    <property type="term" value="F:S-adenosylmethionine-dependent methyltransferase activity"/>
    <property type="evidence" value="ECO:0007669"/>
    <property type="project" value="UniProtKB-UniRule"/>
</dbReference>
<dbReference type="GO" id="GO:0032259">
    <property type="term" value="P:methylation"/>
    <property type="evidence" value="ECO:0007669"/>
    <property type="project" value="UniProtKB-KW"/>
</dbReference>
<dbReference type="GO" id="GO:0006364">
    <property type="term" value="P:rRNA processing"/>
    <property type="evidence" value="ECO:0007669"/>
    <property type="project" value="UniProtKB-UniRule"/>
</dbReference>
<dbReference type="Gene3D" id="3.30.2300.20">
    <property type="match status" value="1"/>
</dbReference>
<dbReference type="Gene3D" id="3.30.70.2810">
    <property type="match status" value="1"/>
</dbReference>
<dbReference type="Gene3D" id="3.40.50.150">
    <property type="entry name" value="Vaccinia Virus protein VP39"/>
    <property type="match status" value="1"/>
</dbReference>
<dbReference type="HAMAP" id="MF_01551">
    <property type="entry name" value="23SrRNA_methyltr_M"/>
    <property type="match status" value="1"/>
</dbReference>
<dbReference type="InterPro" id="IPR040739">
    <property type="entry name" value="RlmM_FDX"/>
</dbReference>
<dbReference type="InterPro" id="IPR048646">
    <property type="entry name" value="RlmM_THUMP-like"/>
</dbReference>
<dbReference type="InterPro" id="IPR002877">
    <property type="entry name" value="RNA_MeTrfase_FtsJ_dom"/>
</dbReference>
<dbReference type="InterPro" id="IPR011224">
    <property type="entry name" value="rRNA_MeTrfase_M"/>
</dbReference>
<dbReference type="InterPro" id="IPR029063">
    <property type="entry name" value="SAM-dependent_MTases_sf"/>
</dbReference>
<dbReference type="NCBIfam" id="NF008734">
    <property type="entry name" value="PRK11760.1"/>
    <property type="match status" value="1"/>
</dbReference>
<dbReference type="PANTHER" id="PTHR37524">
    <property type="entry name" value="RIBOSOMAL RNA LARGE SUBUNIT METHYLTRANSFERASE M"/>
    <property type="match status" value="1"/>
</dbReference>
<dbReference type="PANTHER" id="PTHR37524:SF2">
    <property type="entry name" value="RIBOSOMAL RNA METHYLTRANSFERASE FTSJ DOMAIN-CONTAINING PROTEIN"/>
    <property type="match status" value="1"/>
</dbReference>
<dbReference type="Pfam" id="PF01728">
    <property type="entry name" value="FtsJ"/>
    <property type="match status" value="1"/>
</dbReference>
<dbReference type="Pfam" id="PF18125">
    <property type="entry name" value="RlmM_FDX"/>
    <property type="match status" value="1"/>
</dbReference>
<dbReference type="Pfam" id="PF21239">
    <property type="entry name" value="RLMM_N"/>
    <property type="match status" value="1"/>
</dbReference>
<dbReference type="PIRSF" id="PIRSF028774">
    <property type="entry name" value="UCP028774"/>
    <property type="match status" value="1"/>
</dbReference>
<dbReference type="SUPFAM" id="SSF53335">
    <property type="entry name" value="S-adenosyl-L-methionine-dependent methyltransferases"/>
    <property type="match status" value="1"/>
</dbReference>
<gene>
    <name evidence="1" type="primary">rlmM</name>
    <name type="ordered locus">PD_1906</name>
</gene>
<protein>
    <recommendedName>
        <fullName evidence="1">Ribosomal RNA large subunit methyltransferase M</fullName>
        <ecNumber evidence="1">2.1.1.186</ecNumber>
    </recommendedName>
    <alternativeName>
        <fullName evidence="1">23S rRNA (cytidine2498-2'-O)-methyltransferase</fullName>
    </alternativeName>
    <alternativeName>
        <fullName evidence="1">23S rRNA 2'-O-ribose methyltransferase RlmM</fullName>
    </alternativeName>
</protein>
<keyword id="KW-0963">Cytoplasm</keyword>
<keyword id="KW-0489">Methyltransferase</keyword>
<keyword id="KW-1185">Reference proteome</keyword>
<keyword id="KW-0698">rRNA processing</keyword>
<keyword id="KW-0949">S-adenosyl-L-methionine</keyword>
<keyword id="KW-0808">Transferase</keyword>
<name>RLMM_XYLFT</name>
<evidence type="ECO:0000255" key="1">
    <source>
        <dbReference type="HAMAP-Rule" id="MF_01551"/>
    </source>
</evidence>
<reference key="1">
    <citation type="journal article" date="2003" name="J. Bacteriol.">
        <title>Comparative analyses of the complete genome sequences of Pierce's disease and citrus variegated chlorosis strains of Xylella fastidiosa.</title>
        <authorList>
            <person name="Van Sluys M.A."/>
            <person name="de Oliveira M.C."/>
            <person name="Monteiro-Vitorello C.B."/>
            <person name="Miyaki C.Y."/>
            <person name="Furlan L.R."/>
            <person name="Camargo L.E.A."/>
            <person name="da Silva A.C.R."/>
            <person name="Moon D.H."/>
            <person name="Takita M.A."/>
            <person name="Lemos E.G.M."/>
            <person name="Machado M.A."/>
            <person name="Ferro M.I.T."/>
            <person name="da Silva F.R."/>
            <person name="Goldman M.H.S."/>
            <person name="Goldman G.H."/>
            <person name="Lemos M.V.F."/>
            <person name="El-Dorry H."/>
            <person name="Tsai S.M."/>
            <person name="Carrer H."/>
            <person name="Carraro D.M."/>
            <person name="de Oliveira R.C."/>
            <person name="Nunes L.R."/>
            <person name="Siqueira W.J."/>
            <person name="Coutinho L.L."/>
            <person name="Kimura E.T."/>
            <person name="Ferro E.S."/>
            <person name="Harakava R."/>
            <person name="Kuramae E.E."/>
            <person name="Marino C.L."/>
            <person name="Giglioti E."/>
            <person name="Abreu I.L."/>
            <person name="Alves L.M.C."/>
            <person name="do Amaral A.M."/>
            <person name="Baia G.S."/>
            <person name="Blanco S.R."/>
            <person name="Brito M.S."/>
            <person name="Cannavan F.S."/>
            <person name="Celestino A.V."/>
            <person name="da Cunha A.F."/>
            <person name="Fenille R.C."/>
            <person name="Ferro J.A."/>
            <person name="Formighieri E.F."/>
            <person name="Kishi L.T."/>
            <person name="Leoni S.G."/>
            <person name="Oliveira A.R."/>
            <person name="Rosa V.E. Jr."/>
            <person name="Sassaki F.T."/>
            <person name="Sena J.A.D."/>
            <person name="de Souza A.A."/>
            <person name="Truffi D."/>
            <person name="Tsukumo F."/>
            <person name="Yanai G.M."/>
            <person name="Zaros L.G."/>
            <person name="Civerolo E.L."/>
            <person name="Simpson A.J.G."/>
            <person name="Almeida N.F. Jr."/>
            <person name="Setubal J.C."/>
            <person name="Kitajima J.P."/>
        </authorList>
    </citation>
    <scope>NUCLEOTIDE SEQUENCE [LARGE SCALE GENOMIC DNA]</scope>
    <source>
        <strain>Temecula1 / ATCC 700964</strain>
    </source>
</reference>
<feature type="chain" id="PRO_0000070438" description="Ribosomal RNA large subunit methyltransferase M">
    <location>
        <begin position="1"/>
        <end position="351"/>
    </location>
</feature>
<feature type="active site" description="Proton acceptor" evidence="1">
    <location>
        <position position="303"/>
    </location>
</feature>
<feature type="binding site" evidence="1">
    <location>
        <position position="186"/>
    </location>
    <ligand>
        <name>S-adenosyl-L-methionine</name>
        <dbReference type="ChEBI" id="CHEBI:59789"/>
    </ligand>
</feature>
<feature type="binding site" evidence="1">
    <location>
        <begin position="219"/>
        <end position="222"/>
    </location>
    <ligand>
        <name>S-adenosyl-L-methionine</name>
        <dbReference type="ChEBI" id="CHEBI:59789"/>
    </ligand>
</feature>
<feature type="binding site" evidence="1">
    <location>
        <position position="238"/>
    </location>
    <ligand>
        <name>S-adenosyl-L-methionine</name>
        <dbReference type="ChEBI" id="CHEBI:59789"/>
    </ligand>
</feature>
<feature type="binding site" evidence="1">
    <location>
        <position position="258"/>
    </location>
    <ligand>
        <name>S-adenosyl-L-methionine</name>
        <dbReference type="ChEBI" id="CHEBI:59789"/>
    </ligand>
</feature>
<feature type="binding site" evidence="1">
    <location>
        <position position="274"/>
    </location>
    <ligand>
        <name>S-adenosyl-L-methionine</name>
        <dbReference type="ChEBI" id="CHEBI:59789"/>
    </ligand>
</feature>
<accession>Q87AC0</accession>